<evidence type="ECO:0000305" key="1"/>
<organism>
    <name type="scientific">Caenorhabditis elegans</name>
    <dbReference type="NCBI Taxonomy" id="6239"/>
    <lineage>
        <taxon>Eukaryota</taxon>
        <taxon>Metazoa</taxon>
        <taxon>Ecdysozoa</taxon>
        <taxon>Nematoda</taxon>
        <taxon>Chromadorea</taxon>
        <taxon>Rhabditida</taxon>
        <taxon>Rhabditina</taxon>
        <taxon>Rhabditomorpha</taxon>
        <taxon>Rhabditoidea</taxon>
        <taxon>Rhabditidae</taxon>
        <taxon>Peloderinae</taxon>
        <taxon>Caenorhabditis</taxon>
    </lineage>
</organism>
<accession>Q09235</accession>
<keyword id="KW-1185">Reference proteome</keyword>
<feature type="chain" id="PRO_0000065175" description="Uncharacterized protein C13B9.2">
    <location>
        <begin position="1"/>
        <end position="458"/>
    </location>
</feature>
<comment type="similarity">
    <text evidence="1">Belongs to the glycerate kinase type-2 family.</text>
</comment>
<gene>
    <name type="ORF">C13B9.2</name>
</gene>
<reference key="1">
    <citation type="journal article" date="1998" name="Science">
        <title>Genome sequence of the nematode C. elegans: a platform for investigating biology.</title>
        <authorList>
            <consortium name="The C. elegans sequencing consortium"/>
        </authorList>
    </citation>
    <scope>NUCLEOTIDE SEQUENCE [LARGE SCALE GENOMIC DNA]</scope>
    <source>
        <strain>Bristol N2</strain>
    </source>
</reference>
<proteinExistence type="inferred from homology"/>
<name>YQ42_CAEEL</name>
<dbReference type="EMBL" id="FO080523">
    <property type="protein sequence ID" value="CCD64381.1"/>
    <property type="molecule type" value="Genomic_DNA"/>
</dbReference>
<dbReference type="RefSeq" id="NP_498462.3">
    <property type="nucleotide sequence ID" value="NM_066061.4"/>
</dbReference>
<dbReference type="SMR" id="Q09235"/>
<dbReference type="FunCoup" id="Q09235">
    <property type="interactions" value="454"/>
</dbReference>
<dbReference type="STRING" id="6239.C13B9.2.1"/>
<dbReference type="PaxDb" id="6239-C13B9.2"/>
<dbReference type="PeptideAtlas" id="Q09235"/>
<dbReference type="EnsemblMetazoa" id="C13B9.2.1">
    <property type="protein sequence ID" value="C13B9.2.1"/>
    <property type="gene ID" value="WBGene00015733"/>
</dbReference>
<dbReference type="EnsemblMetazoa" id="C13B9.2.2">
    <property type="protein sequence ID" value="C13B9.2.2"/>
    <property type="gene ID" value="WBGene00015733"/>
</dbReference>
<dbReference type="EnsemblMetazoa" id="C13B9.2.3">
    <property type="protein sequence ID" value="C13B9.2.3"/>
    <property type="gene ID" value="WBGene00015733"/>
</dbReference>
<dbReference type="GeneID" id="266887"/>
<dbReference type="KEGG" id="cel:CELE_C13B9.2"/>
<dbReference type="UCSC" id="C13B9.2">
    <property type="organism name" value="c. elegans"/>
</dbReference>
<dbReference type="AGR" id="WB:WBGene00015733"/>
<dbReference type="CTD" id="266887"/>
<dbReference type="WormBase" id="C13B9.2">
    <property type="protein sequence ID" value="CE41197"/>
    <property type="gene ID" value="WBGene00015733"/>
</dbReference>
<dbReference type="eggNOG" id="KOG3935">
    <property type="taxonomic scope" value="Eukaryota"/>
</dbReference>
<dbReference type="GeneTree" id="ENSGT00390000014365"/>
<dbReference type="HOGENOM" id="CLU_032279_1_1_1"/>
<dbReference type="InParanoid" id="Q09235"/>
<dbReference type="OMA" id="GKAAWRM"/>
<dbReference type="OrthoDB" id="44918at2759"/>
<dbReference type="PhylomeDB" id="Q09235"/>
<dbReference type="Reactome" id="R-CEL-70350">
    <property type="pathway name" value="Fructose catabolism"/>
</dbReference>
<dbReference type="PRO" id="PR:Q09235"/>
<dbReference type="Proteomes" id="UP000001940">
    <property type="component" value="Chromosome III"/>
</dbReference>
<dbReference type="Bgee" id="WBGene00015733">
    <property type="expression patterns" value="Expressed in adult organism and 4 other cell types or tissues"/>
</dbReference>
<dbReference type="GO" id="GO:0005737">
    <property type="term" value="C:cytoplasm"/>
    <property type="evidence" value="ECO:0000318"/>
    <property type="project" value="GO_Central"/>
</dbReference>
<dbReference type="GO" id="GO:0008887">
    <property type="term" value="F:glycerate kinase activity"/>
    <property type="evidence" value="ECO:0000318"/>
    <property type="project" value="GO_Central"/>
</dbReference>
<dbReference type="FunFam" id="3.40.1480.10:FF:000003">
    <property type="entry name" value="D-glycerate 2-kinase"/>
    <property type="match status" value="1"/>
</dbReference>
<dbReference type="FunFam" id="3.40.50.10180:FF:000004">
    <property type="entry name" value="Glycerate 2-kinase"/>
    <property type="match status" value="1"/>
</dbReference>
<dbReference type="Gene3D" id="3.40.50.10180">
    <property type="entry name" value="Glycerate kinase, MOFRL-like N-terminal domain"/>
    <property type="match status" value="1"/>
</dbReference>
<dbReference type="Gene3D" id="3.40.1480.10">
    <property type="entry name" value="MOFRL domain"/>
    <property type="match status" value="1"/>
</dbReference>
<dbReference type="InterPro" id="IPR037035">
    <property type="entry name" value="GK-like_C_sf"/>
</dbReference>
<dbReference type="InterPro" id="IPR038614">
    <property type="entry name" value="GK_N_sf"/>
</dbReference>
<dbReference type="InterPro" id="IPR007835">
    <property type="entry name" value="MOFRL"/>
</dbReference>
<dbReference type="InterPro" id="IPR025286">
    <property type="entry name" value="MOFRL_assoc_dom"/>
</dbReference>
<dbReference type="InterPro" id="IPR039760">
    <property type="entry name" value="MOFRL_protein"/>
</dbReference>
<dbReference type="PANTHER" id="PTHR12227">
    <property type="entry name" value="GLYCERATE KINASE"/>
    <property type="match status" value="1"/>
</dbReference>
<dbReference type="PANTHER" id="PTHR12227:SF0">
    <property type="entry name" value="GLYCERATE KINASE"/>
    <property type="match status" value="1"/>
</dbReference>
<dbReference type="Pfam" id="PF13660">
    <property type="entry name" value="DUF4147"/>
    <property type="match status" value="1"/>
</dbReference>
<dbReference type="Pfam" id="PF05161">
    <property type="entry name" value="MOFRL"/>
    <property type="match status" value="1"/>
</dbReference>
<dbReference type="SUPFAM" id="SSF82544">
    <property type="entry name" value="GckA/TtuD-like"/>
    <property type="match status" value="1"/>
</dbReference>
<protein>
    <recommendedName>
        <fullName>Uncharacterized protein C13B9.2</fullName>
    </recommendedName>
</protein>
<sequence length="458" mass="49781">MATRKAVRTAFEKCLLAVEPRSIVRNAISLNPSLLKIADYNYSLSNSTKIVVIAFGKASILMAKGARDQLKSSLLQKTIVIAPEQQKGIENELENDTEILYGARDNLPDEKSVFATRKVISEIRDFDSESTIFLFLISGGGSALLTSPSAPLDLAEKLETIRIMQAHGATIQELNTIRQNLSDVKGGKLLREIKKGCSIALIISDVIGNPVELIASGPTVIPAHQQDKFIISNILESLKINKLELPVNVKNVLENHEKEQLPENTSRFQNFIISSNNFALRAAAEYLTSSGYNSTIVTSSLSGNAAEIGKKFAEIITEKSITSSHLLKNSNLTIENYPIALLFGGETTVHLSENPGKGGRNQEMVLSCLDALKTRVPAHNFTFLSAGTDGQDGPTDAAGAIISNEDLPLNSLLNSSEFLQNSDSYNFWRQFKGGANHILTGPSGTNVMDIQILLLDQL</sequence>